<dbReference type="EC" id="5.4.99.25" evidence="1"/>
<dbReference type="EMBL" id="AP009510">
    <property type="protein sequence ID" value="BAG13721.1"/>
    <property type="molecule type" value="Genomic_DNA"/>
</dbReference>
<dbReference type="RefSeq" id="WP_015423248.1">
    <property type="nucleotide sequence ID" value="NC_020419.1"/>
</dbReference>
<dbReference type="SMR" id="B1GZN9"/>
<dbReference type="STRING" id="471821.TGRD_238"/>
<dbReference type="KEGG" id="eti:RSTT_212"/>
<dbReference type="KEGG" id="rsd:TGRD_238"/>
<dbReference type="PATRIC" id="fig|471821.5.peg.354"/>
<dbReference type="HOGENOM" id="CLU_032087_2_0_0"/>
<dbReference type="OrthoDB" id="9802309at2"/>
<dbReference type="Proteomes" id="UP000001691">
    <property type="component" value="Chromosome"/>
</dbReference>
<dbReference type="GO" id="GO:0003723">
    <property type="term" value="F:RNA binding"/>
    <property type="evidence" value="ECO:0007669"/>
    <property type="project" value="InterPro"/>
</dbReference>
<dbReference type="GO" id="GO:0160148">
    <property type="term" value="F:tRNA pseudouridine(55) synthase activity"/>
    <property type="evidence" value="ECO:0007669"/>
    <property type="project" value="UniProtKB-EC"/>
</dbReference>
<dbReference type="GO" id="GO:1990481">
    <property type="term" value="P:mRNA pseudouridine synthesis"/>
    <property type="evidence" value="ECO:0007669"/>
    <property type="project" value="TreeGrafter"/>
</dbReference>
<dbReference type="GO" id="GO:0031119">
    <property type="term" value="P:tRNA pseudouridine synthesis"/>
    <property type="evidence" value="ECO:0007669"/>
    <property type="project" value="UniProtKB-UniRule"/>
</dbReference>
<dbReference type="CDD" id="cd02573">
    <property type="entry name" value="PseudoU_synth_EcTruB"/>
    <property type="match status" value="1"/>
</dbReference>
<dbReference type="Gene3D" id="3.30.2350.10">
    <property type="entry name" value="Pseudouridine synthase"/>
    <property type="match status" value="1"/>
</dbReference>
<dbReference type="HAMAP" id="MF_01080">
    <property type="entry name" value="TruB_bact"/>
    <property type="match status" value="1"/>
</dbReference>
<dbReference type="InterPro" id="IPR020103">
    <property type="entry name" value="PsdUridine_synth_cat_dom_sf"/>
</dbReference>
<dbReference type="InterPro" id="IPR002501">
    <property type="entry name" value="PsdUridine_synth_N"/>
</dbReference>
<dbReference type="InterPro" id="IPR014780">
    <property type="entry name" value="tRNA_psdUridine_synth_TruB"/>
</dbReference>
<dbReference type="InterPro" id="IPR032819">
    <property type="entry name" value="TruB_C"/>
</dbReference>
<dbReference type="NCBIfam" id="TIGR00431">
    <property type="entry name" value="TruB"/>
    <property type="match status" value="1"/>
</dbReference>
<dbReference type="PANTHER" id="PTHR13767:SF2">
    <property type="entry name" value="PSEUDOURIDYLATE SYNTHASE TRUB1"/>
    <property type="match status" value="1"/>
</dbReference>
<dbReference type="PANTHER" id="PTHR13767">
    <property type="entry name" value="TRNA-PSEUDOURIDINE SYNTHASE"/>
    <property type="match status" value="1"/>
</dbReference>
<dbReference type="Pfam" id="PF16198">
    <property type="entry name" value="TruB_C_2"/>
    <property type="match status" value="1"/>
</dbReference>
<dbReference type="Pfam" id="PF01509">
    <property type="entry name" value="TruB_N"/>
    <property type="match status" value="1"/>
</dbReference>
<dbReference type="SUPFAM" id="SSF55120">
    <property type="entry name" value="Pseudouridine synthase"/>
    <property type="match status" value="1"/>
</dbReference>
<keyword id="KW-0413">Isomerase</keyword>
<keyword id="KW-0819">tRNA processing</keyword>
<reference key="1">
    <citation type="journal article" date="2008" name="Proc. Natl. Acad. Sci. U.S.A.">
        <title>Complete genome of the uncultured termite group 1 bacteria in a single host protist cell.</title>
        <authorList>
            <person name="Hongoh Y."/>
            <person name="Sharma V.K."/>
            <person name="Prakash T."/>
            <person name="Noda S."/>
            <person name="Taylor T.D."/>
            <person name="Kudo T."/>
            <person name="Sakaki Y."/>
            <person name="Toyoda A."/>
            <person name="Hattori M."/>
            <person name="Ohkuma M."/>
        </authorList>
    </citation>
    <scope>NUCLEOTIDE SEQUENCE [LARGE SCALE GENOMIC DNA]</scope>
</reference>
<accession>B1GZN9</accession>
<feature type="chain" id="PRO_1000136820" description="tRNA pseudouridine synthase B">
    <location>
        <begin position="1"/>
        <end position="230"/>
    </location>
</feature>
<feature type="active site" description="Nucleophile" evidence="1">
    <location>
        <position position="45"/>
    </location>
</feature>
<gene>
    <name evidence="1" type="primary">truB</name>
    <name type="ordered locus">TGRD_238</name>
</gene>
<proteinExistence type="inferred from homology"/>
<organism>
    <name type="scientific">Endomicrobium trichonymphae</name>
    <dbReference type="NCBI Taxonomy" id="1408204"/>
    <lineage>
        <taxon>Bacteria</taxon>
        <taxon>Pseudomonadati</taxon>
        <taxon>Elusimicrobiota</taxon>
        <taxon>Endomicrobiia</taxon>
        <taxon>Endomicrobiales</taxon>
        <taxon>Endomicrobiaceae</taxon>
        <taxon>Candidatus Endomicrobiellum</taxon>
    </lineage>
</organism>
<protein>
    <recommendedName>
        <fullName evidence="1">tRNA pseudouridine synthase B</fullName>
        <ecNumber evidence="1">5.4.99.25</ecNumber>
    </recommendedName>
    <alternativeName>
        <fullName evidence="1">tRNA pseudouridine(55) synthase</fullName>
        <shortName evidence="1">Psi55 synthase</shortName>
    </alternativeName>
    <alternativeName>
        <fullName evidence="1">tRNA pseudouridylate synthase</fullName>
    </alternativeName>
    <alternativeName>
        <fullName evidence="1">tRNA-uridine isomerase</fullName>
    </alternativeName>
</protein>
<comment type="function">
    <text evidence="1">Responsible for synthesis of pseudouridine from uracil-55 in the psi GC loop of transfer RNAs.</text>
</comment>
<comment type="catalytic activity">
    <reaction evidence="1">
        <text>uridine(55) in tRNA = pseudouridine(55) in tRNA</text>
        <dbReference type="Rhea" id="RHEA:42532"/>
        <dbReference type="Rhea" id="RHEA-COMP:10101"/>
        <dbReference type="Rhea" id="RHEA-COMP:10102"/>
        <dbReference type="ChEBI" id="CHEBI:65314"/>
        <dbReference type="ChEBI" id="CHEBI:65315"/>
        <dbReference type="EC" id="5.4.99.25"/>
    </reaction>
</comment>
<comment type="similarity">
    <text evidence="1">Belongs to the pseudouridine synthase TruB family. Type 1 subfamily.</text>
</comment>
<name>TRUB_ENDTX</name>
<evidence type="ECO:0000255" key="1">
    <source>
        <dbReference type="HAMAP-Rule" id="MF_01080"/>
    </source>
</evidence>
<sequence>MSQSYNNIDGLLLLDKPFGITSFDAVYKIKKVLNVEKTGHCGTLDPASTGLLLVLMGKATKLQAKFMKKDKVYLSSFLLGMVTDSGDLDGKVISENSVLNINIEKIKKMVEMFEGEIFQIPPMYSALKYNGKKLCELARQGIEVERKPRKVTIKKFEVLSYDGDIVKVRIECSSGTYIRTLAQDLGNVLKCGATVKTLRREKIDIFDIKDALRFKDTDSADKIIKKLIPL</sequence>